<proteinExistence type="inferred from homology"/>
<comment type="function">
    <text evidence="1">Involved in pre-mRNA splicing.</text>
</comment>
<comment type="subunit">
    <text evidence="1">Associated with the spliceosome.</text>
</comment>
<comment type="subcellular location">
    <subcellularLocation>
        <location evidence="3">Nucleus</location>
    </subcellularLocation>
</comment>
<comment type="similarity">
    <text evidence="3">Belongs to the CWC15 family.</text>
</comment>
<protein>
    <recommendedName>
        <fullName>Pre-mRNA-splicing factor CWC15</fullName>
    </recommendedName>
</protein>
<gene>
    <name type="primary">CWC15</name>
    <name type="ordered locus">AGL168W</name>
</gene>
<organism>
    <name type="scientific">Eremothecium gossypii (strain ATCC 10895 / CBS 109.51 / FGSC 9923 / NRRL Y-1056)</name>
    <name type="common">Yeast</name>
    <name type="synonym">Ashbya gossypii</name>
    <dbReference type="NCBI Taxonomy" id="284811"/>
    <lineage>
        <taxon>Eukaryota</taxon>
        <taxon>Fungi</taxon>
        <taxon>Dikarya</taxon>
        <taxon>Ascomycota</taxon>
        <taxon>Saccharomycotina</taxon>
        <taxon>Saccharomycetes</taxon>
        <taxon>Saccharomycetales</taxon>
        <taxon>Saccharomycetaceae</taxon>
        <taxon>Eremothecium</taxon>
    </lineage>
</organism>
<accession>Q750V7</accession>
<sequence>MTTSHRPQLEARSGTKSGVAGEYVPTGVKHARLLPGHRTVKRRREGGATAEDEERERAGAETRTVDCNEGTDELAGEGRSAGSGDGDEASSAEDSSDADDEDDVDNPEELRRELEALRASKTGAKTGAKTGAKTGEKGAGGGGWRAGAVFGRQKRRREQAEGRAYRNDVTQSEYHQDFLRRLTK</sequence>
<name>CWC15_EREGS</name>
<evidence type="ECO:0000250" key="1"/>
<evidence type="ECO:0000256" key="2">
    <source>
        <dbReference type="SAM" id="MobiDB-lite"/>
    </source>
</evidence>
<evidence type="ECO:0000305" key="3"/>
<feature type="chain" id="PRO_0000218236" description="Pre-mRNA-splicing factor CWC15">
    <location>
        <begin position="1"/>
        <end position="184"/>
    </location>
</feature>
<feature type="region of interest" description="Disordered" evidence="2">
    <location>
        <begin position="1"/>
        <end position="184"/>
    </location>
</feature>
<feature type="compositionally biased region" description="Basic and acidic residues" evidence="2">
    <location>
        <begin position="55"/>
        <end position="66"/>
    </location>
</feature>
<feature type="compositionally biased region" description="Acidic residues" evidence="2">
    <location>
        <begin position="85"/>
        <end position="107"/>
    </location>
</feature>
<feature type="compositionally biased region" description="Basic and acidic residues" evidence="2">
    <location>
        <begin position="108"/>
        <end position="118"/>
    </location>
</feature>
<feature type="compositionally biased region" description="Low complexity" evidence="2">
    <location>
        <begin position="119"/>
        <end position="133"/>
    </location>
</feature>
<feature type="compositionally biased region" description="Basic and acidic residues" evidence="2">
    <location>
        <begin position="174"/>
        <end position="184"/>
    </location>
</feature>
<dbReference type="EMBL" id="AE016820">
    <property type="protein sequence ID" value="AAS54323.1"/>
    <property type="molecule type" value="Genomic_DNA"/>
</dbReference>
<dbReference type="RefSeq" id="NP_986499.1">
    <property type="nucleotide sequence ID" value="NM_211561.1"/>
</dbReference>
<dbReference type="FunCoup" id="Q750V7">
    <property type="interactions" value="160"/>
</dbReference>
<dbReference type="STRING" id="284811.Q750V7"/>
<dbReference type="EnsemblFungi" id="AAS54323">
    <property type="protein sequence ID" value="AAS54323"/>
    <property type="gene ID" value="AGOS_AGL168W"/>
</dbReference>
<dbReference type="GeneID" id="4622792"/>
<dbReference type="KEGG" id="ago:AGOS_AGL168W"/>
<dbReference type="eggNOG" id="KOG3228">
    <property type="taxonomic scope" value="Eukaryota"/>
</dbReference>
<dbReference type="HOGENOM" id="CLU_100667_0_0_1"/>
<dbReference type="InParanoid" id="Q750V7"/>
<dbReference type="OMA" id="NIKEHAT"/>
<dbReference type="OrthoDB" id="30179at2759"/>
<dbReference type="Proteomes" id="UP000000591">
    <property type="component" value="Chromosome VII"/>
</dbReference>
<dbReference type="GO" id="GO:0071013">
    <property type="term" value="C:catalytic step 2 spliceosome"/>
    <property type="evidence" value="ECO:0000318"/>
    <property type="project" value="GO_Central"/>
</dbReference>
<dbReference type="GO" id="GO:0005634">
    <property type="term" value="C:nucleus"/>
    <property type="evidence" value="ECO:0000250"/>
    <property type="project" value="UniProtKB"/>
</dbReference>
<dbReference type="GO" id="GO:0000974">
    <property type="term" value="C:Prp19 complex"/>
    <property type="evidence" value="ECO:0007669"/>
    <property type="project" value="EnsemblFungi"/>
</dbReference>
<dbReference type="GO" id="GO:0005684">
    <property type="term" value="C:U2-type spliceosomal complex"/>
    <property type="evidence" value="ECO:0007669"/>
    <property type="project" value="EnsemblFungi"/>
</dbReference>
<dbReference type="GO" id="GO:0003723">
    <property type="term" value="F:RNA binding"/>
    <property type="evidence" value="ECO:0000250"/>
    <property type="project" value="UniProtKB"/>
</dbReference>
<dbReference type="GO" id="GO:0045292">
    <property type="term" value="P:mRNA cis splicing, via spliceosome"/>
    <property type="evidence" value="ECO:0000318"/>
    <property type="project" value="GO_Central"/>
</dbReference>
<dbReference type="GO" id="GO:0000398">
    <property type="term" value="P:mRNA splicing, via spliceosome"/>
    <property type="evidence" value="ECO:0000250"/>
    <property type="project" value="UniProtKB"/>
</dbReference>
<dbReference type="InterPro" id="IPR006973">
    <property type="entry name" value="Cwf_Cwc_15"/>
</dbReference>
<dbReference type="PANTHER" id="PTHR12718">
    <property type="entry name" value="CELL CYCLE CONTROL PROTEIN CWF15"/>
    <property type="match status" value="1"/>
</dbReference>
<dbReference type="PANTHER" id="PTHR12718:SF2">
    <property type="entry name" value="SPLICEOSOME-ASSOCIATED PROTEIN CWC15 HOMOLOG"/>
    <property type="match status" value="1"/>
</dbReference>
<keyword id="KW-0507">mRNA processing</keyword>
<keyword id="KW-0508">mRNA splicing</keyword>
<keyword id="KW-0539">Nucleus</keyword>
<keyword id="KW-1185">Reference proteome</keyword>
<keyword id="KW-0747">Spliceosome</keyword>
<reference key="1">
    <citation type="journal article" date="2004" name="Science">
        <title>The Ashbya gossypii genome as a tool for mapping the ancient Saccharomyces cerevisiae genome.</title>
        <authorList>
            <person name="Dietrich F.S."/>
            <person name="Voegeli S."/>
            <person name="Brachat S."/>
            <person name="Lerch A."/>
            <person name="Gates K."/>
            <person name="Steiner S."/>
            <person name="Mohr C."/>
            <person name="Poehlmann R."/>
            <person name="Luedi P."/>
            <person name="Choi S."/>
            <person name="Wing R.A."/>
            <person name="Flavier A."/>
            <person name="Gaffney T.D."/>
            <person name="Philippsen P."/>
        </authorList>
    </citation>
    <scope>NUCLEOTIDE SEQUENCE [LARGE SCALE GENOMIC DNA]</scope>
    <source>
        <strain>ATCC 10895 / CBS 109.51 / FGSC 9923 / NRRL Y-1056</strain>
    </source>
</reference>
<reference key="2">
    <citation type="journal article" date="2013" name="G3 (Bethesda)">
        <title>Genomes of Ashbya fungi isolated from insects reveal four mating-type loci, numerous translocations, lack of transposons, and distinct gene duplications.</title>
        <authorList>
            <person name="Dietrich F.S."/>
            <person name="Voegeli S."/>
            <person name="Kuo S."/>
            <person name="Philippsen P."/>
        </authorList>
    </citation>
    <scope>GENOME REANNOTATION</scope>
    <source>
        <strain>ATCC 10895 / CBS 109.51 / FGSC 9923 / NRRL Y-1056</strain>
    </source>
</reference>